<name>ABL_DROME</name>
<feature type="chain" id="PRO_0000088054" description="Tyrosine-protein kinase Abl">
    <location>
        <begin position="1"/>
        <end position="1620"/>
    </location>
</feature>
<feature type="domain" description="SH3" evidence="4">
    <location>
        <begin position="187"/>
        <end position="248"/>
    </location>
</feature>
<feature type="domain" description="SH2" evidence="3">
    <location>
        <begin position="254"/>
        <end position="346"/>
    </location>
</feature>
<feature type="domain" description="Protein kinase" evidence="2">
    <location>
        <begin position="371"/>
        <end position="627"/>
    </location>
</feature>
<feature type="region of interest" description="Disordered" evidence="6">
    <location>
        <begin position="1"/>
        <end position="97"/>
    </location>
</feature>
<feature type="region of interest" description="Disordered" evidence="6">
    <location>
        <begin position="139"/>
        <end position="168"/>
    </location>
</feature>
<feature type="region of interest" description="Disordered" evidence="6">
    <location>
        <begin position="642"/>
        <end position="672"/>
    </location>
</feature>
<feature type="region of interest" description="Disordered" evidence="6">
    <location>
        <begin position="687"/>
        <end position="774"/>
    </location>
</feature>
<feature type="region of interest" description="Disordered" evidence="6">
    <location>
        <begin position="798"/>
        <end position="819"/>
    </location>
</feature>
<feature type="region of interest" description="Disordered" evidence="6">
    <location>
        <begin position="836"/>
        <end position="906"/>
    </location>
</feature>
<feature type="region of interest" description="Disordered" evidence="6">
    <location>
        <begin position="951"/>
        <end position="998"/>
    </location>
</feature>
<feature type="region of interest" description="Disordered" evidence="6">
    <location>
        <begin position="1012"/>
        <end position="1154"/>
    </location>
</feature>
<feature type="region of interest" description="Disordered" evidence="6">
    <location>
        <begin position="1199"/>
        <end position="1222"/>
    </location>
</feature>
<feature type="region of interest" description="Disordered" evidence="6">
    <location>
        <begin position="1362"/>
        <end position="1470"/>
    </location>
</feature>
<feature type="short sequence motif" description="Kinase activation loop" evidence="1">
    <location>
        <begin position="510"/>
        <end position="534"/>
    </location>
</feature>
<feature type="compositionally biased region" description="Basic and acidic residues" evidence="6">
    <location>
        <begin position="1"/>
        <end position="11"/>
    </location>
</feature>
<feature type="compositionally biased region" description="Low complexity" evidence="6">
    <location>
        <begin position="33"/>
        <end position="50"/>
    </location>
</feature>
<feature type="compositionally biased region" description="Low complexity" evidence="6">
    <location>
        <begin position="58"/>
        <end position="70"/>
    </location>
</feature>
<feature type="compositionally biased region" description="Gly residues" evidence="6">
    <location>
        <begin position="71"/>
        <end position="84"/>
    </location>
</feature>
<feature type="compositionally biased region" description="Gly residues" evidence="6">
    <location>
        <begin position="147"/>
        <end position="160"/>
    </location>
</feature>
<feature type="compositionally biased region" description="Low complexity" evidence="6">
    <location>
        <begin position="642"/>
        <end position="656"/>
    </location>
</feature>
<feature type="compositionally biased region" description="Low complexity" evidence="6">
    <location>
        <begin position="663"/>
        <end position="672"/>
    </location>
</feature>
<feature type="compositionally biased region" description="Polar residues" evidence="6">
    <location>
        <begin position="708"/>
        <end position="747"/>
    </location>
</feature>
<feature type="compositionally biased region" description="Low complexity" evidence="6">
    <location>
        <begin position="756"/>
        <end position="765"/>
    </location>
</feature>
<feature type="compositionally biased region" description="Acidic residues" evidence="6">
    <location>
        <begin position="803"/>
        <end position="814"/>
    </location>
</feature>
<feature type="compositionally biased region" description="Polar residues" evidence="6">
    <location>
        <begin position="896"/>
        <end position="905"/>
    </location>
</feature>
<feature type="compositionally biased region" description="Polar residues" evidence="6">
    <location>
        <begin position="987"/>
        <end position="998"/>
    </location>
</feature>
<feature type="compositionally biased region" description="Low complexity" evidence="6">
    <location>
        <begin position="1023"/>
        <end position="1044"/>
    </location>
</feature>
<feature type="compositionally biased region" description="Pro residues" evidence="6">
    <location>
        <begin position="1055"/>
        <end position="1080"/>
    </location>
</feature>
<feature type="compositionally biased region" description="Low complexity" evidence="6">
    <location>
        <begin position="1097"/>
        <end position="1119"/>
    </location>
</feature>
<feature type="compositionally biased region" description="Pro residues" evidence="6">
    <location>
        <begin position="1402"/>
        <end position="1411"/>
    </location>
</feature>
<feature type="compositionally biased region" description="Low complexity" evidence="6">
    <location>
        <begin position="1412"/>
        <end position="1432"/>
    </location>
</feature>
<feature type="compositionally biased region" description="Polar residues" evidence="6">
    <location>
        <begin position="1433"/>
        <end position="1448"/>
    </location>
</feature>
<feature type="active site" description="Proton acceptor" evidence="2 5">
    <location>
        <position position="492"/>
    </location>
</feature>
<feature type="binding site" evidence="2">
    <location>
        <begin position="377"/>
        <end position="385"/>
    </location>
    <ligand>
        <name>ATP</name>
        <dbReference type="ChEBI" id="CHEBI:30616"/>
    </ligand>
</feature>
<feature type="binding site" evidence="2">
    <location>
        <position position="400"/>
    </location>
    <ligand>
        <name>ATP</name>
        <dbReference type="ChEBI" id="CHEBI:30616"/>
    </ligand>
</feature>
<feature type="binding site" evidence="2">
    <location>
        <begin position="445"/>
        <end position="451"/>
    </location>
    <ligand>
        <name>ATP</name>
        <dbReference type="ChEBI" id="CHEBI:30616"/>
    </ligand>
</feature>
<feature type="modified residue" description="Phosphotyrosine; by autocatalysis" evidence="1">
    <location>
        <position position="522"/>
    </location>
</feature>
<feature type="modified residue" description="Phosphotyrosine" evidence="9">
    <location>
        <position position="1497"/>
    </location>
</feature>
<feature type="sequence conflict" description="In Ref. 1; AAA28934." evidence="13" ref="1">
    <original>AASLLADA</original>
    <variation>RPLFWRI</variation>
    <location>
        <begin position="129"/>
        <end position="136"/>
    </location>
</feature>
<feature type="sequence conflict" description="In Ref. 5." evidence="13" ref="5">
    <original>LSPE</original>
    <variation>ASAQ</variation>
    <location>
        <begin position="357"/>
        <end position="360"/>
    </location>
</feature>
<feature type="sequence conflict" description="In Ref. 5." evidence="13" ref="5">
    <original>ESSI</original>
    <variation>VGDV</variation>
    <location>
        <begin position="628"/>
        <end position="631"/>
    </location>
</feature>
<feature type="sequence conflict" description="In Ref. 1; AAA28934." evidence="13" ref="1">
    <original>AEP</original>
    <variation>RT</variation>
    <location>
        <begin position="1241"/>
        <end position="1243"/>
    </location>
</feature>
<reference key="1">
    <citation type="journal article" date="1988" name="Mol. Cell. Biol.">
        <title>DNA sequence, structure, and tyrosine kinase activity of the Drosophila melanogaster Abelson proto-oncogene homolog.</title>
        <authorList>
            <person name="Henkemeyer M.J."/>
            <person name="Bennett R.L."/>
            <person name="Gertler F.B."/>
            <person name="Hoffmann F.M."/>
        </authorList>
    </citation>
    <scope>NUCLEOTIDE SEQUENCE [GENOMIC DNA]</scope>
    <scope>CATALYTIC ACTIVITY</scope>
    <scope>DEVELOPMENTAL STAGE</scope>
</reference>
<reference key="2">
    <citation type="journal article" date="2000" name="Science">
        <title>The genome sequence of Drosophila melanogaster.</title>
        <authorList>
            <person name="Adams M.D."/>
            <person name="Celniker S.E."/>
            <person name="Holt R.A."/>
            <person name="Evans C.A."/>
            <person name="Gocayne J.D."/>
            <person name="Amanatides P.G."/>
            <person name="Scherer S.E."/>
            <person name="Li P.W."/>
            <person name="Hoskins R.A."/>
            <person name="Galle R.F."/>
            <person name="George R.A."/>
            <person name="Lewis S.E."/>
            <person name="Richards S."/>
            <person name="Ashburner M."/>
            <person name="Henderson S.N."/>
            <person name="Sutton G.G."/>
            <person name="Wortman J.R."/>
            <person name="Yandell M.D."/>
            <person name="Zhang Q."/>
            <person name="Chen L.X."/>
            <person name="Brandon R.C."/>
            <person name="Rogers Y.-H.C."/>
            <person name="Blazej R.G."/>
            <person name="Champe M."/>
            <person name="Pfeiffer B.D."/>
            <person name="Wan K.H."/>
            <person name="Doyle C."/>
            <person name="Baxter E.G."/>
            <person name="Helt G."/>
            <person name="Nelson C.R."/>
            <person name="Miklos G.L.G."/>
            <person name="Abril J.F."/>
            <person name="Agbayani A."/>
            <person name="An H.-J."/>
            <person name="Andrews-Pfannkoch C."/>
            <person name="Baldwin D."/>
            <person name="Ballew R.M."/>
            <person name="Basu A."/>
            <person name="Baxendale J."/>
            <person name="Bayraktaroglu L."/>
            <person name="Beasley E.M."/>
            <person name="Beeson K.Y."/>
            <person name="Benos P.V."/>
            <person name="Berman B.P."/>
            <person name="Bhandari D."/>
            <person name="Bolshakov S."/>
            <person name="Borkova D."/>
            <person name="Botchan M.R."/>
            <person name="Bouck J."/>
            <person name="Brokstein P."/>
            <person name="Brottier P."/>
            <person name="Burtis K.C."/>
            <person name="Busam D.A."/>
            <person name="Butler H."/>
            <person name="Cadieu E."/>
            <person name="Center A."/>
            <person name="Chandra I."/>
            <person name="Cherry J.M."/>
            <person name="Cawley S."/>
            <person name="Dahlke C."/>
            <person name="Davenport L.B."/>
            <person name="Davies P."/>
            <person name="de Pablos B."/>
            <person name="Delcher A."/>
            <person name="Deng Z."/>
            <person name="Mays A.D."/>
            <person name="Dew I."/>
            <person name="Dietz S.M."/>
            <person name="Dodson K."/>
            <person name="Doup L.E."/>
            <person name="Downes M."/>
            <person name="Dugan-Rocha S."/>
            <person name="Dunkov B.C."/>
            <person name="Dunn P."/>
            <person name="Durbin K.J."/>
            <person name="Evangelista C.C."/>
            <person name="Ferraz C."/>
            <person name="Ferriera S."/>
            <person name="Fleischmann W."/>
            <person name="Fosler C."/>
            <person name="Gabrielian A.E."/>
            <person name="Garg N.S."/>
            <person name="Gelbart W.M."/>
            <person name="Glasser K."/>
            <person name="Glodek A."/>
            <person name="Gong F."/>
            <person name="Gorrell J.H."/>
            <person name="Gu Z."/>
            <person name="Guan P."/>
            <person name="Harris M."/>
            <person name="Harris N.L."/>
            <person name="Harvey D.A."/>
            <person name="Heiman T.J."/>
            <person name="Hernandez J.R."/>
            <person name="Houck J."/>
            <person name="Hostin D."/>
            <person name="Houston K.A."/>
            <person name="Howland T.J."/>
            <person name="Wei M.-H."/>
            <person name="Ibegwam C."/>
            <person name="Jalali M."/>
            <person name="Kalush F."/>
            <person name="Karpen G.H."/>
            <person name="Ke Z."/>
            <person name="Kennison J.A."/>
            <person name="Ketchum K.A."/>
            <person name="Kimmel B.E."/>
            <person name="Kodira C.D."/>
            <person name="Kraft C.L."/>
            <person name="Kravitz S."/>
            <person name="Kulp D."/>
            <person name="Lai Z."/>
            <person name="Lasko P."/>
            <person name="Lei Y."/>
            <person name="Levitsky A.A."/>
            <person name="Li J.H."/>
            <person name="Li Z."/>
            <person name="Liang Y."/>
            <person name="Lin X."/>
            <person name="Liu X."/>
            <person name="Mattei B."/>
            <person name="McIntosh T.C."/>
            <person name="McLeod M.P."/>
            <person name="McPherson D."/>
            <person name="Merkulov G."/>
            <person name="Milshina N.V."/>
            <person name="Mobarry C."/>
            <person name="Morris J."/>
            <person name="Moshrefi A."/>
            <person name="Mount S.M."/>
            <person name="Moy M."/>
            <person name="Murphy B."/>
            <person name="Murphy L."/>
            <person name="Muzny D.M."/>
            <person name="Nelson D.L."/>
            <person name="Nelson D.R."/>
            <person name="Nelson K.A."/>
            <person name="Nixon K."/>
            <person name="Nusskern D.R."/>
            <person name="Pacleb J.M."/>
            <person name="Palazzolo M."/>
            <person name="Pittman G.S."/>
            <person name="Pan S."/>
            <person name="Pollard J."/>
            <person name="Puri V."/>
            <person name="Reese M.G."/>
            <person name="Reinert K."/>
            <person name="Remington K."/>
            <person name="Saunders R.D.C."/>
            <person name="Scheeler F."/>
            <person name="Shen H."/>
            <person name="Shue B.C."/>
            <person name="Siden-Kiamos I."/>
            <person name="Simpson M."/>
            <person name="Skupski M.P."/>
            <person name="Smith T.J."/>
            <person name="Spier E."/>
            <person name="Spradling A.C."/>
            <person name="Stapleton M."/>
            <person name="Strong R."/>
            <person name="Sun E."/>
            <person name="Svirskas R."/>
            <person name="Tector C."/>
            <person name="Turner R."/>
            <person name="Venter E."/>
            <person name="Wang A.H."/>
            <person name="Wang X."/>
            <person name="Wang Z.-Y."/>
            <person name="Wassarman D.A."/>
            <person name="Weinstock G.M."/>
            <person name="Weissenbach J."/>
            <person name="Williams S.M."/>
            <person name="Woodage T."/>
            <person name="Worley K.C."/>
            <person name="Wu D."/>
            <person name="Yang S."/>
            <person name="Yao Q.A."/>
            <person name="Ye J."/>
            <person name="Yeh R.-F."/>
            <person name="Zaveri J.S."/>
            <person name="Zhan M."/>
            <person name="Zhang G."/>
            <person name="Zhao Q."/>
            <person name="Zheng L."/>
            <person name="Zheng X.H."/>
            <person name="Zhong F.N."/>
            <person name="Zhong W."/>
            <person name="Zhou X."/>
            <person name="Zhu S.C."/>
            <person name="Zhu X."/>
            <person name="Smith H.O."/>
            <person name="Gibbs R.A."/>
            <person name="Myers E.W."/>
            <person name="Rubin G.M."/>
            <person name="Venter J.C."/>
        </authorList>
    </citation>
    <scope>NUCLEOTIDE SEQUENCE [LARGE SCALE GENOMIC DNA]</scope>
    <source>
        <strain>Berkeley</strain>
    </source>
</reference>
<reference key="3">
    <citation type="journal article" date="2002" name="Genome Biol.">
        <title>Annotation of the Drosophila melanogaster euchromatic genome: a systematic review.</title>
        <authorList>
            <person name="Misra S."/>
            <person name="Crosby M.A."/>
            <person name="Mungall C.J."/>
            <person name="Matthews B.B."/>
            <person name="Campbell K.S."/>
            <person name="Hradecky P."/>
            <person name="Huang Y."/>
            <person name="Kaminker J.S."/>
            <person name="Millburn G.H."/>
            <person name="Prochnik S.E."/>
            <person name="Smith C.D."/>
            <person name="Tupy J.L."/>
            <person name="Whitfield E.J."/>
            <person name="Bayraktaroglu L."/>
            <person name="Berman B.P."/>
            <person name="Bettencourt B.R."/>
            <person name="Celniker S.E."/>
            <person name="de Grey A.D.N.J."/>
            <person name="Drysdale R.A."/>
            <person name="Harris N.L."/>
            <person name="Richter J."/>
            <person name="Russo S."/>
            <person name="Schroeder A.J."/>
            <person name="Shu S.Q."/>
            <person name="Stapleton M."/>
            <person name="Yamada C."/>
            <person name="Ashburner M."/>
            <person name="Gelbart W.M."/>
            <person name="Rubin G.M."/>
            <person name="Lewis S.E."/>
        </authorList>
    </citation>
    <scope>GENOME REANNOTATION</scope>
    <source>
        <strain>Berkeley</strain>
    </source>
</reference>
<reference key="4">
    <citation type="journal article" date="2002" name="Genome Biol.">
        <title>A Drosophila full-length cDNA resource.</title>
        <authorList>
            <person name="Stapleton M."/>
            <person name="Carlson J.W."/>
            <person name="Brokstein P."/>
            <person name="Yu C."/>
            <person name="Champe M."/>
            <person name="George R.A."/>
            <person name="Guarin H."/>
            <person name="Kronmiller B."/>
            <person name="Pacleb J.M."/>
            <person name="Park S."/>
            <person name="Wan K.H."/>
            <person name="Rubin G.M."/>
            <person name="Celniker S.E."/>
        </authorList>
    </citation>
    <scope>NUCLEOTIDE SEQUENCE [LARGE SCALE MRNA] OF 61-1620</scope>
    <source>
        <strain>Berkeley</strain>
        <tissue>Embryo</tissue>
    </source>
</reference>
<reference key="5">
    <citation type="journal article" date="1983" name="Cell">
        <title>Nucleotide sequences of the Drosophila src and abl homologs: conservation and variability in the src family oncogenes.</title>
        <authorList>
            <person name="Hoffmann F.M."/>
            <person name="Fresco L.D."/>
            <person name="Hoffman-Falk H."/>
            <person name="Shilo B.-Z."/>
        </authorList>
    </citation>
    <scope>NUCLEOTIDE SEQUENCE [GENOMIC DNA] OF 357-631</scope>
</reference>
<reference key="6">
    <citation type="journal article" date="1998" name="Curr. Biol.">
        <title>Roles of Armadillo, a Drosophila catenin, during central nervous system development.</title>
        <authorList>
            <person name="Loureiro J."/>
            <person name="Peifer M."/>
        </authorList>
    </citation>
    <scope>FUNCTION</scope>
    <scope>TISSUE SPECIFICITY</scope>
    <scope>DISRUPTION PHENOTYPE</scope>
</reference>
<reference key="7">
    <citation type="journal article" date="2001" name="J. Cell Biol.">
        <title>Abelson kinase regulates epithelial morphogenesis in Drosophila.</title>
        <authorList>
            <person name="Grevengoed E.E."/>
            <person name="Loureiro J.J."/>
            <person name="Jesse T.L."/>
            <person name="Peifer M."/>
        </authorList>
    </citation>
    <scope>FUNCTION</scope>
    <scope>TISSUE SPECIFICITY</scope>
    <scope>DISRUPTION PHENOTYPE</scope>
</reference>
<reference key="8">
    <citation type="journal article" date="2003" name="J. Neurobiol.">
        <title>Abelson tyrosine kinase is required to transduce midline repulsive cues.</title>
        <authorList>
            <person name="Hsouna A."/>
            <person name="Kim Y.-S."/>
            <person name="VanBerkum M.F.A."/>
        </authorList>
    </citation>
    <scope>FUNCTION</scope>
</reference>
<reference key="9">
    <citation type="journal article" date="2007" name="Mol. Biosyst.">
        <title>An integrated chemical, mass spectrometric and computational strategy for (quantitative) phosphoproteomics: application to Drosophila melanogaster Kc167 cells.</title>
        <authorList>
            <person name="Bodenmiller B."/>
            <person name="Mueller L.N."/>
            <person name="Pedrioli P.G.A."/>
            <person name="Pflieger D."/>
            <person name="Juenger M.A."/>
            <person name="Eng J.K."/>
            <person name="Aebersold R."/>
            <person name="Tao W.A."/>
        </authorList>
    </citation>
    <scope>PHOSPHORYLATION [LARGE SCALE ANALYSIS] AT TYR-1497</scope>
    <scope>IDENTIFICATION BY MASS SPECTROMETRY</scope>
</reference>
<reference key="10">
    <citation type="journal article" date="2023" name="Sci. Rep.">
        <title>Adult expression of Semaphorins and Plexins is essential for motor neuron survival.</title>
        <authorList>
            <person name="Vaikakkara Chithran A."/>
            <person name="Allan D.W."/>
            <person name="O'Connor T.P."/>
        </authorList>
    </citation>
    <scope>FUNCTION</scope>
    <scope>DISRUPTION PHENOTYPE</scope>
</reference>
<proteinExistence type="evidence at protein level"/>
<evidence type="ECO:0000250" key="1"/>
<evidence type="ECO:0000255" key="2">
    <source>
        <dbReference type="PROSITE-ProRule" id="PRU00159"/>
    </source>
</evidence>
<evidence type="ECO:0000255" key="3">
    <source>
        <dbReference type="PROSITE-ProRule" id="PRU00191"/>
    </source>
</evidence>
<evidence type="ECO:0000255" key="4">
    <source>
        <dbReference type="PROSITE-ProRule" id="PRU00192"/>
    </source>
</evidence>
<evidence type="ECO:0000255" key="5">
    <source>
        <dbReference type="PROSITE-ProRule" id="PRU10028"/>
    </source>
</evidence>
<evidence type="ECO:0000256" key="6">
    <source>
        <dbReference type="SAM" id="MobiDB-lite"/>
    </source>
</evidence>
<evidence type="ECO:0000269" key="7">
    <source>
    </source>
</evidence>
<evidence type="ECO:0000269" key="8">
    <source>
    </source>
</evidence>
<evidence type="ECO:0000269" key="9">
    <source>
    </source>
</evidence>
<evidence type="ECO:0000269" key="10">
    <source>
    </source>
</evidence>
<evidence type="ECO:0000269" key="11">
    <source>
    </source>
</evidence>
<evidence type="ECO:0000269" key="12">
    <source>
    </source>
</evidence>
<evidence type="ECO:0000305" key="13"/>
<accession>P00522</accession>
<accession>Q95TV1</accession>
<accession>Q9VV86</accession>
<protein>
    <recommendedName>
        <fullName>Tyrosine-protein kinase Abl</fullName>
        <ecNumber>2.7.10.2</ecNumber>
    </recommendedName>
    <alternativeName>
        <fullName>D-ash</fullName>
    </alternativeName>
    <alternativeName>
        <fullName>Protein abelson</fullName>
    </alternativeName>
</protein>
<sequence>MGAQQGKDRGAHSGGGGSGAPVSCIGLSSSPVASVSPHCISSSSGVSSAPLGGGSTLRGSRIKSSSSGVASGSGSGGGGGGSGSGLSQRSGGHKDARCNPTVGLNIFTEHNEALLQSRPLPHIPAGSTAASLLADAAELQQHQQDSGGLGLQGSSLGGGHSSTTSVFESAHRWTSKENLLAPGPEEDDPQLFVALYDFQAGGENQLSLKKGEQVRILSYNKSGEWCEAHSDSGNVGWVPSNYVTPLNSLEKHSWYHGPISRNAAEYLLSSGINGSFLVRESESSPGQRSISLRYEGRVYHYRISEDPDGKVFVTQEAKFNTLAELVHHHSVPHEGHGLITPLLYPAPKQNKPTVFPLSPEPDEWEICRTDIMMKHKLGGGQYGEVYEAVWKRYGNTVAVKTLKEDTMALKDFLEEAAIMKEMKHPNLVQLIGVCTREPPFYIITEFMSHGNLLDFLRSAGRETLDAVALLYMATQIASGMSYLESRNYIHRDLAARNCLVGDNKLVKVADFGLARLMRDDTYTAHAGAKFPIKWTAPEGLAYNKFSTKSDVWAFGVLLWEIATYGMSPYPAIDLTDVYHKLDKGYRMERPPGCPPEVYDLMRQCWQWDATDRPTFKSIHHALEHMFQESSITEAVEKQLNANATSASSSAPSTSGVATGGGATTTTAASGCASSSSATASLSLTPQMVKKGLPGGQALTPNAHHNDPHQQQASTPMSETGSTSTKLSTFSSQGKGNVQMRRTTNKQGKQAPAPPKRTSLLSSSRDSTYREEDPANARCNFIDDLSTNGLARDINSLTQRYDSETDPAADPDTDATGDSLEQSLSQVIAAPVTNKMQHSLHSGGGGGGIGPRSSQQHSSFKRPTGTPVMGNRGLETRQSKRSQLHSQAPGPGPPSTQPHHGNNGVVTSAHPITVGALDVMNVKQVVNRYGTLPKGARIGAYLDSLEDSSEAAPALPATAPSLPPANGHATPPAARLNPKASPIPPQQMIRSNSSGGVTMQNNAAASLNKLQRHRTTTEGTMMTFSSFRAGGSSSSPKRSASGVASGVQPALANLEFPPPPLDLPPPPEEFEGGPPPPPPAPESAVQAIQQHLHAQLPNNGNISNGNGTNNNDSSHNDVSNIAPSVEEASSRFGVSLRKREPSTDSCSSLGSPPEDLKEKLITEIKAAGKDTAPASHLANGSGIAVVDPVSLLVTELAESMNLPKPPPQQQQKLTNGNSTGSGFKAQLKKVEPKKMSAPMPKAEPANTIIDFKAHLRRVDKEKEPATPAPAPATVAVANNANCNTTGTLNRKEDGSKKFSQAMQKTEIKIDVTNSNVEADAGAAGEGDLGKRRSTGSINSLKKLWEQQPPAPDYATSTILQQQPSVVNGGGTPNAQLSPKYGMKSGAINTVGTLPAKLGNKQPPAAPPPPPPNCTTSNSSTTSISTSSRDCTSRQQASSTIKTSHSTQLFTDDEEQSHTEGLGSGGQGSADMTQSLYEQKPQIQQKPAVPHKPTKLTIYATPIAKLTEPASSASSTQISRESILELVGLLEGSLKHPVNAIAGSQWLQLSDKLNILHNSCVIFAENGAMPPHSKFQFRELVTRVEAQSQHLRSAGSKNVQDNERLVAEVGQSLRQISNALNR</sequence>
<organism>
    <name type="scientific">Drosophila melanogaster</name>
    <name type="common">Fruit fly</name>
    <dbReference type="NCBI Taxonomy" id="7227"/>
    <lineage>
        <taxon>Eukaryota</taxon>
        <taxon>Metazoa</taxon>
        <taxon>Ecdysozoa</taxon>
        <taxon>Arthropoda</taxon>
        <taxon>Hexapoda</taxon>
        <taxon>Insecta</taxon>
        <taxon>Pterygota</taxon>
        <taxon>Neoptera</taxon>
        <taxon>Endopterygota</taxon>
        <taxon>Diptera</taxon>
        <taxon>Brachycera</taxon>
        <taxon>Muscomorpha</taxon>
        <taxon>Ephydroidea</taxon>
        <taxon>Drosophilidae</taxon>
        <taxon>Drosophila</taxon>
        <taxon>Sophophora</taxon>
    </lineage>
</organism>
<gene>
    <name type="primary">Abl</name>
    <name type="synonym">ABL-1</name>
    <name type="synonym">Dash</name>
    <name type="ORF">CG4032</name>
</gene>
<dbReference type="EC" id="2.7.10.2"/>
<dbReference type="EMBL" id="M19692">
    <property type="protein sequence ID" value="AAA28934.1"/>
    <property type="status" value="ALT_SEQ"/>
    <property type="molecule type" value="Genomic_DNA"/>
</dbReference>
<dbReference type="EMBL" id="M19690">
    <property type="protein sequence ID" value="AAA28934.1"/>
    <property type="status" value="JOINED"/>
    <property type="molecule type" value="Genomic_DNA"/>
</dbReference>
<dbReference type="EMBL" id="M19691">
    <property type="protein sequence ID" value="AAA28934.1"/>
    <property type="status" value="JOINED"/>
    <property type="molecule type" value="Genomic_DNA"/>
</dbReference>
<dbReference type="EMBL" id="AE014296">
    <property type="protein sequence ID" value="AAF49431.2"/>
    <property type="molecule type" value="Genomic_DNA"/>
</dbReference>
<dbReference type="EMBL" id="AY058497">
    <property type="protein sequence ID" value="AAL13726.1"/>
    <property type="status" value="ALT_FRAME"/>
    <property type="molecule type" value="mRNA"/>
</dbReference>
<dbReference type="EMBL" id="K01042">
    <property type="protein sequence ID" value="AAA28443.1"/>
    <property type="molecule type" value="Genomic_DNA"/>
</dbReference>
<dbReference type="PIR" id="A28128">
    <property type="entry name" value="TVFFA"/>
</dbReference>
<dbReference type="RefSeq" id="NP_001287085.1">
    <property type="nucleotide sequence ID" value="NM_001300156.1"/>
</dbReference>
<dbReference type="RefSeq" id="NP_524843.2">
    <property type="nucleotide sequence ID" value="NM_080104.3"/>
</dbReference>
<dbReference type="SMR" id="P00522"/>
<dbReference type="BioGRID" id="69904">
    <property type="interactions" value="43"/>
</dbReference>
<dbReference type="FunCoup" id="P00522">
    <property type="interactions" value="77"/>
</dbReference>
<dbReference type="IntAct" id="P00522">
    <property type="interactions" value="9"/>
</dbReference>
<dbReference type="STRING" id="7227.FBpp0303166"/>
<dbReference type="GlyGen" id="P00522">
    <property type="glycosylation" value="1 site"/>
</dbReference>
<dbReference type="iPTMnet" id="P00522"/>
<dbReference type="PaxDb" id="7227-FBpp0303166"/>
<dbReference type="EnsemblMetazoa" id="FBtr0075357">
    <property type="protein sequence ID" value="FBpp0075116"/>
    <property type="gene ID" value="FBgn0000017"/>
</dbReference>
<dbReference type="EnsemblMetazoa" id="FBtr0345369">
    <property type="protein sequence ID" value="FBpp0311523"/>
    <property type="gene ID" value="FBgn0000017"/>
</dbReference>
<dbReference type="GeneID" id="45821"/>
<dbReference type="KEGG" id="dme:Dmel_CG4032"/>
<dbReference type="AGR" id="FB:FBgn0000017"/>
<dbReference type="CTD" id="45821"/>
<dbReference type="FlyBase" id="FBgn0000017">
    <property type="gene designation" value="Abl"/>
</dbReference>
<dbReference type="VEuPathDB" id="VectorBase:FBgn0000017"/>
<dbReference type="eggNOG" id="KOG4278">
    <property type="taxonomic scope" value="Eukaryota"/>
</dbReference>
<dbReference type="InParanoid" id="P00522"/>
<dbReference type="OrthoDB" id="98077at2759"/>
<dbReference type="BRENDA" id="2.7.10.2">
    <property type="organism ID" value="1994"/>
</dbReference>
<dbReference type="Reactome" id="R-DME-2029482">
    <property type="pathway name" value="Regulation of actin dynamics for phagocytic cup formation"/>
</dbReference>
<dbReference type="Reactome" id="R-DME-428890">
    <property type="pathway name" value="Role of ABL in ROBO-SLIT signaling"/>
</dbReference>
<dbReference type="Reactome" id="R-DME-525793">
    <property type="pathway name" value="Myogenesis"/>
</dbReference>
<dbReference type="Reactome" id="R-DME-5663213">
    <property type="pathway name" value="RHO GTPases Activate WASPs and WAVEs"/>
</dbReference>
<dbReference type="Reactome" id="R-DME-5693565">
    <property type="pathway name" value="Recruitment and ATM-mediated phosphorylation of repair and signaling proteins at DNA double strand breaks"/>
</dbReference>
<dbReference type="Reactome" id="R-DME-69231">
    <property type="pathway name" value="Cyclin D associated events in G1"/>
</dbReference>
<dbReference type="Reactome" id="R-DME-9013149">
    <property type="pathway name" value="RAC1 GTPase cycle"/>
</dbReference>
<dbReference type="Reactome" id="R-DME-9013423">
    <property type="pathway name" value="RAC3 GTPase cycle"/>
</dbReference>
<dbReference type="Reactome" id="R-DME-9841922">
    <property type="pathway name" value="MLL4 and MLL3 complexes regulate expression of PPARG target genes in adipogenesis and hepatic steatosis"/>
</dbReference>
<dbReference type="Reactome" id="R-DME-9860927">
    <property type="pathway name" value="Turbulent (oscillatory, disturbed) flow shear stress activates signaling by PIEZO1 and integrins in endothelial cells"/>
</dbReference>
<dbReference type="SignaLink" id="P00522"/>
<dbReference type="BioGRID-ORCS" id="45821">
    <property type="hits" value="0 hits in 3 CRISPR screens"/>
</dbReference>
<dbReference type="GenomeRNAi" id="45821"/>
<dbReference type="PRO" id="PR:P00522"/>
<dbReference type="Proteomes" id="UP000000803">
    <property type="component" value="Chromosome 3L"/>
</dbReference>
<dbReference type="Bgee" id="FBgn0000017">
    <property type="expression patterns" value="Expressed in hemocyte (sensu Nematoda and Protostomia) in imaginal disc-derived wing and 280 other cell types or tissues"/>
</dbReference>
<dbReference type="ExpressionAtlas" id="P00522">
    <property type="expression patterns" value="baseline and differential"/>
</dbReference>
<dbReference type="GO" id="GO:0045179">
    <property type="term" value="C:apical cortex"/>
    <property type="evidence" value="ECO:0000314"/>
    <property type="project" value="FlyBase"/>
</dbReference>
<dbReference type="GO" id="GO:0030424">
    <property type="term" value="C:axon"/>
    <property type="evidence" value="ECO:0000314"/>
    <property type="project" value="FlyBase"/>
</dbReference>
<dbReference type="GO" id="GO:0005938">
    <property type="term" value="C:cell cortex"/>
    <property type="evidence" value="ECO:0000314"/>
    <property type="project" value="FlyBase"/>
</dbReference>
<dbReference type="GO" id="GO:0005829">
    <property type="term" value="C:cytosol"/>
    <property type="evidence" value="ECO:0000314"/>
    <property type="project" value="FlyBase"/>
</dbReference>
<dbReference type="GO" id="GO:0031234">
    <property type="term" value="C:extrinsic component of cytoplasmic side of plasma membrane"/>
    <property type="evidence" value="ECO:0000314"/>
    <property type="project" value="FlyBase"/>
</dbReference>
<dbReference type="GO" id="GO:0005886">
    <property type="term" value="C:plasma membrane"/>
    <property type="evidence" value="ECO:0000318"/>
    <property type="project" value="GO_Central"/>
</dbReference>
<dbReference type="GO" id="GO:0045202">
    <property type="term" value="C:synapse"/>
    <property type="evidence" value="ECO:0007669"/>
    <property type="project" value="GOC"/>
</dbReference>
<dbReference type="GO" id="GO:0005524">
    <property type="term" value="F:ATP binding"/>
    <property type="evidence" value="ECO:0007669"/>
    <property type="project" value="UniProtKB-KW"/>
</dbReference>
<dbReference type="GO" id="GO:0004715">
    <property type="term" value="F:non-membrane spanning protein tyrosine kinase activity"/>
    <property type="evidence" value="ECO:0000314"/>
    <property type="project" value="FlyBase"/>
</dbReference>
<dbReference type="GO" id="GO:0004713">
    <property type="term" value="F:protein tyrosine kinase activity"/>
    <property type="evidence" value="ECO:0000314"/>
    <property type="project" value="FlyBase"/>
</dbReference>
<dbReference type="GO" id="GO:0003401">
    <property type="term" value="P:axis elongation"/>
    <property type="evidence" value="ECO:0000315"/>
    <property type="project" value="FlyBase"/>
</dbReference>
<dbReference type="GO" id="GO:0007411">
    <property type="term" value="P:axon guidance"/>
    <property type="evidence" value="ECO:0000315"/>
    <property type="project" value="FlyBase"/>
</dbReference>
<dbReference type="GO" id="GO:0016199">
    <property type="term" value="P:axon midline choice point recognition"/>
    <property type="evidence" value="ECO:0000315"/>
    <property type="project" value="FlyBase"/>
</dbReference>
<dbReference type="GO" id="GO:0007409">
    <property type="term" value="P:axonogenesis"/>
    <property type="evidence" value="ECO:0000316"/>
    <property type="project" value="FlyBase"/>
</dbReference>
<dbReference type="GO" id="GO:0021785">
    <property type="term" value="P:branchiomotor neuron axon guidance"/>
    <property type="evidence" value="ECO:0000315"/>
    <property type="project" value="CACAO"/>
</dbReference>
<dbReference type="GO" id="GO:0007417">
    <property type="term" value="P:central nervous system development"/>
    <property type="evidence" value="ECO:0000316"/>
    <property type="project" value="FlyBase"/>
</dbReference>
<dbReference type="GO" id="GO:0007268">
    <property type="term" value="P:chemical synaptic transmission"/>
    <property type="evidence" value="ECO:0000315"/>
    <property type="project" value="CACAO"/>
</dbReference>
<dbReference type="GO" id="GO:0048749">
    <property type="term" value="P:compound eye development"/>
    <property type="evidence" value="ECO:0000316"/>
    <property type="project" value="FlyBase"/>
</dbReference>
<dbReference type="GO" id="GO:0048813">
    <property type="term" value="P:dendrite morphogenesis"/>
    <property type="evidence" value="ECO:0000315"/>
    <property type="project" value="FlyBase"/>
</dbReference>
<dbReference type="GO" id="GO:0007391">
    <property type="term" value="P:dorsal closure"/>
    <property type="evidence" value="ECO:0000315"/>
    <property type="project" value="FlyBase"/>
</dbReference>
<dbReference type="GO" id="GO:0003382">
    <property type="term" value="P:epithelial cell morphogenesis"/>
    <property type="evidence" value="ECO:0000315"/>
    <property type="project" value="FlyBase"/>
</dbReference>
<dbReference type="GO" id="GO:0007611">
    <property type="term" value="P:learning or memory"/>
    <property type="evidence" value="ECO:0000315"/>
    <property type="project" value="CACAO"/>
</dbReference>
<dbReference type="GO" id="GO:0008045">
    <property type="term" value="P:motor neuron axon guidance"/>
    <property type="evidence" value="ECO:0000315"/>
    <property type="project" value="FlyBase"/>
</dbReference>
<dbReference type="GO" id="GO:0010977">
    <property type="term" value="P:negative regulation of neuron projection development"/>
    <property type="evidence" value="ECO:0000315"/>
    <property type="project" value="CACAO"/>
</dbReference>
<dbReference type="GO" id="GO:0045886">
    <property type="term" value="P:negative regulation of synaptic assembly at neuromuscular junction"/>
    <property type="evidence" value="ECO:0000315"/>
    <property type="project" value="FlyBase"/>
</dbReference>
<dbReference type="GO" id="GO:0001764">
    <property type="term" value="P:neuron migration"/>
    <property type="evidence" value="ECO:0000315"/>
    <property type="project" value="FlyBase"/>
</dbReference>
<dbReference type="GO" id="GO:0016318">
    <property type="term" value="P:ommatidial rotation"/>
    <property type="evidence" value="ECO:0000315"/>
    <property type="project" value="FlyBase"/>
</dbReference>
<dbReference type="GO" id="GO:0007300">
    <property type="term" value="P:ovarian nurse cell to oocyte transport"/>
    <property type="evidence" value="ECO:0000315"/>
    <property type="project" value="FlyBase"/>
</dbReference>
<dbReference type="GO" id="GO:0072499">
    <property type="term" value="P:photoreceptor cell axon guidance"/>
    <property type="evidence" value="ECO:0000315"/>
    <property type="project" value="FlyBase"/>
</dbReference>
<dbReference type="GO" id="GO:0010592">
    <property type="term" value="P:positive regulation of lamellipodium assembly"/>
    <property type="evidence" value="ECO:0000315"/>
    <property type="project" value="CACAO"/>
</dbReference>
<dbReference type="GO" id="GO:0046827">
    <property type="term" value="P:positive regulation of protein export from nucleus"/>
    <property type="evidence" value="ECO:0000315"/>
    <property type="project" value="FlyBase"/>
</dbReference>
<dbReference type="GO" id="GO:0008064">
    <property type="term" value="P:regulation of actin polymerization or depolymerization"/>
    <property type="evidence" value="ECO:0000304"/>
    <property type="project" value="FlyBase"/>
</dbReference>
<dbReference type="GO" id="GO:1903391">
    <property type="term" value="P:regulation of adherens junction organization"/>
    <property type="evidence" value="ECO:0000315"/>
    <property type="project" value="FlyBase"/>
</dbReference>
<dbReference type="GO" id="GO:0008360">
    <property type="term" value="P:regulation of cell shape"/>
    <property type="evidence" value="ECO:0000315"/>
    <property type="project" value="FlyBase"/>
</dbReference>
<dbReference type="GO" id="GO:0032880">
    <property type="term" value="P:regulation of protein localization"/>
    <property type="evidence" value="ECO:0000314"/>
    <property type="project" value="FlyBase"/>
</dbReference>
<dbReference type="GO" id="GO:0031647">
    <property type="term" value="P:regulation of protein stability"/>
    <property type="evidence" value="ECO:0000315"/>
    <property type="project" value="FlyBase"/>
</dbReference>
<dbReference type="GO" id="GO:0007419">
    <property type="term" value="P:ventral cord development"/>
    <property type="evidence" value="ECO:0000315"/>
    <property type="project" value="FlyBase"/>
</dbReference>
<dbReference type="GO" id="GO:0007370">
    <property type="term" value="P:ventral furrow formation"/>
    <property type="evidence" value="ECO:0000315"/>
    <property type="project" value="FlyBase"/>
</dbReference>
<dbReference type="CDD" id="cd05052">
    <property type="entry name" value="PTKc_Abl"/>
    <property type="match status" value="1"/>
</dbReference>
<dbReference type="CDD" id="cd09935">
    <property type="entry name" value="SH2_ABL"/>
    <property type="match status" value="1"/>
</dbReference>
<dbReference type="CDD" id="cd11850">
    <property type="entry name" value="SH3_Abl"/>
    <property type="match status" value="1"/>
</dbReference>
<dbReference type="FunFam" id="1.20.120.330:FF:000014">
    <property type="entry name" value="Abl tyrosine kinase, isoform H"/>
    <property type="match status" value="1"/>
</dbReference>
<dbReference type="FunFam" id="2.30.30.40:FF:000010">
    <property type="entry name" value="Tyrosine-protein kinase"/>
    <property type="match status" value="1"/>
</dbReference>
<dbReference type="FunFam" id="3.30.200.20:FF:000037">
    <property type="entry name" value="Tyrosine-protein kinase"/>
    <property type="match status" value="1"/>
</dbReference>
<dbReference type="FunFam" id="3.30.505.10:FF:000004">
    <property type="entry name" value="Tyrosine-protein kinase"/>
    <property type="match status" value="1"/>
</dbReference>
<dbReference type="FunFam" id="1.10.510.10:FF:000542">
    <property type="entry name" value="Tyrosine-protein kinase Abl"/>
    <property type="match status" value="1"/>
</dbReference>
<dbReference type="Gene3D" id="1.20.120.330">
    <property type="entry name" value="Nucleotidyltransferases domain 2"/>
    <property type="match status" value="1"/>
</dbReference>
<dbReference type="Gene3D" id="3.30.200.20">
    <property type="entry name" value="Phosphorylase Kinase, domain 1"/>
    <property type="match status" value="1"/>
</dbReference>
<dbReference type="Gene3D" id="3.30.505.10">
    <property type="entry name" value="SH2 domain"/>
    <property type="match status" value="1"/>
</dbReference>
<dbReference type="Gene3D" id="2.30.30.40">
    <property type="entry name" value="SH3 Domains"/>
    <property type="match status" value="1"/>
</dbReference>
<dbReference type="Gene3D" id="1.10.510.10">
    <property type="entry name" value="Transferase(Phosphotransferase) domain 1"/>
    <property type="match status" value="1"/>
</dbReference>
<dbReference type="InterPro" id="IPR035837">
    <property type="entry name" value="ABL_SH2"/>
</dbReference>
<dbReference type="InterPro" id="IPR015015">
    <property type="entry name" value="F-actin-binding"/>
</dbReference>
<dbReference type="InterPro" id="IPR011009">
    <property type="entry name" value="Kinase-like_dom_sf"/>
</dbReference>
<dbReference type="InterPro" id="IPR050198">
    <property type="entry name" value="Non-receptor_tyrosine_kinases"/>
</dbReference>
<dbReference type="InterPro" id="IPR000719">
    <property type="entry name" value="Prot_kinase_dom"/>
</dbReference>
<dbReference type="InterPro" id="IPR017441">
    <property type="entry name" value="Protein_kinase_ATP_BS"/>
</dbReference>
<dbReference type="InterPro" id="IPR001245">
    <property type="entry name" value="Ser-Thr/Tyr_kinase_cat_dom"/>
</dbReference>
<dbReference type="InterPro" id="IPR000980">
    <property type="entry name" value="SH2"/>
</dbReference>
<dbReference type="InterPro" id="IPR036860">
    <property type="entry name" value="SH2_dom_sf"/>
</dbReference>
<dbReference type="InterPro" id="IPR036028">
    <property type="entry name" value="SH3-like_dom_sf"/>
</dbReference>
<dbReference type="InterPro" id="IPR001452">
    <property type="entry name" value="SH3_domain"/>
</dbReference>
<dbReference type="InterPro" id="IPR008266">
    <property type="entry name" value="Tyr_kinase_AS"/>
</dbReference>
<dbReference type="InterPro" id="IPR020635">
    <property type="entry name" value="Tyr_kinase_cat_dom"/>
</dbReference>
<dbReference type="PANTHER" id="PTHR24418">
    <property type="entry name" value="TYROSINE-PROTEIN KINASE"/>
    <property type="match status" value="1"/>
</dbReference>
<dbReference type="Pfam" id="PF08919">
    <property type="entry name" value="F_actin_bind"/>
    <property type="match status" value="1"/>
</dbReference>
<dbReference type="Pfam" id="PF07714">
    <property type="entry name" value="PK_Tyr_Ser-Thr"/>
    <property type="match status" value="1"/>
</dbReference>
<dbReference type="Pfam" id="PF00017">
    <property type="entry name" value="SH2"/>
    <property type="match status" value="1"/>
</dbReference>
<dbReference type="Pfam" id="PF00018">
    <property type="entry name" value="SH3_1"/>
    <property type="match status" value="1"/>
</dbReference>
<dbReference type="PRINTS" id="PR00401">
    <property type="entry name" value="SH2DOMAIN"/>
</dbReference>
<dbReference type="PRINTS" id="PR00452">
    <property type="entry name" value="SH3DOMAIN"/>
</dbReference>
<dbReference type="PRINTS" id="PR00109">
    <property type="entry name" value="TYRKINASE"/>
</dbReference>
<dbReference type="SMART" id="SM00808">
    <property type="entry name" value="FABD"/>
    <property type="match status" value="1"/>
</dbReference>
<dbReference type="SMART" id="SM00252">
    <property type="entry name" value="SH2"/>
    <property type="match status" value="1"/>
</dbReference>
<dbReference type="SMART" id="SM00326">
    <property type="entry name" value="SH3"/>
    <property type="match status" value="1"/>
</dbReference>
<dbReference type="SMART" id="SM00219">
    <property type="entry name" value="TyrKc"/>
    <property type="match status" value="1"/>
</dbReference>
<dbReference type="SUPFAM" id="SSF56112">
    <property type="entry name" value="Protein kinase-like (PK-like)"/>
    <property type="match status" value="1"/>
</dbReference>
<dbReference type="SUPFAM" id="SSF55550">
    <property type="entry name" value="SH2 domain"/>
    <property type="match status" value="1"/>
</dbReference>
<dbReference type="SUPFAM" id="SSF50044">
    <property type="entry name" value="SH3-domain"/>
    <property type="match status" value="1"/>
</dbReference>
<dbReference type="PROSITE" id="PS00107">
    <property type="entry name" value="PROTEIN_KINASE_ATP"/>
    <property type="match status" value="1"/>
</dbReference>
<dbReference type="PROSITE" id="PS50011">
    <property type="entry name" value="PROTEIN_KINASE_DOM"/>
    <property type="match status" value="1"/>
</dbReference>
<dbReference type="PROSITE" id="PS00109">
    <property type="entry name" value="PROTEIN_KINASE_TYR"/>
    <property type="match status" value="1"/>
</dbReference>
<dbReference type="PROSITE" id="PS50001">
    <property type="entry name" value="SH2"/>
    <property type="match status" value="1"/>
</dbReference>
<dbReference type="PROSITE" id="PS50002">
    <property type="entry name" value="SH3"/>
    <property type="match status" value="1"/>
</dbReference>
<keyword id="KW-0067">ATP-binding</keyword>
<keyword id="KW-0963">Cytoplasm</keyword>
<keyword id="KW-0418">Kinase</keyword>
<keyword id="KW-0547">Nucleotide-binding</keyword>
<keyword id="KW-0597">Phosphoprotein</keyword>
<keyword id="KW-1185">Reference proteome</keyword>
<keyword id="KW-0727">SH2 domain</keyword>
<keyword id="KW-0728">SH3 domain</keyword>
<keyword id="KW-0808">Transferase</keyword>
<keyword id="KW-0829">Tyrosine-protein kinase</keyword>
<comment type="function">
    <text evidence="7 8 11 12">Arm and Abl proteins function cooperatively at adherens junctions in both the CNS and epidermis; critical for embryonic epithelial morphogenesis regulating cell shape changes and cell migration (PubMed:11756472, PubMed:12973825, PubMed:9635189). Plays a critical role in transducing embryonic midline repulsive cues; may regulate cytoskeletal dynamics underlying a growth cone's response to midline cues (PubMed:12973825). The ability of pCC/MP2 axons to correctly interpret midline repulsive cues and stay on the ipsilateral side is dependent on the strength of both Slit/robo and Abl-dependent signaling pathways (PubMed:12973825). Function in neurons is essential for adult survival, and is important for climbing behavior and activity (PubMed:37041188).</text>
</comment>
<comment type="catalytic activity">
    <reaction evidence="5 10">
        <text>L-tyrosyl-[protein] + ATP = O-phospho-L-tyrosyl-[protein] + ADP + H(+)</text>
        <dbReference type="Rhea" id="RHEA:10596"/>
        <dbReference type="Rhea" id="RHEA-COMP:10136"/>
        <dbReference type="Rhea" id="RHEA-COMP:20101"/>
        <dbReference type="ChEBI" id="CHEBI:15378"/>
        <dbReference type="ChEBI" id="CHEBI:30616"/>
        <dbReference type="ChEBI" id="CHEBI:46858"/>
        <dbReference type="ChEBI" id="CHEBI:61978"/>
        <dbReference type="ChEBI" id="CHEBI:456216"/>
        <dbReference type="EC" id="2.7.10.2"/>
    </reaction>
</comment>
<comment type="interaction">
    <interactant intactId="EBI-534090">
        <id>P00522</id>
    </interactant>
    <interactant intactId="EBI-499383">
        <id>P51140</id>
        <label>dsh</label>
    </interactant>
    <organismsDiffer>false</organismsDiffer>
    <experiments>6</experiments>
</comment>
<comment type="interaction">
    <interactant intactId="EBI-534090">
        <id>P00522</id>
    </interactant>
    <interactant intactId="EBI-466810">
        <id>Q8T4F7</id>
        <label>ena</label>
    </interactant>
    <organismsDiffer>false</organismsDiffer>
    <experiments>2</experiments>
</comment>
<comment type="interaction">
    <interactant intactId="EBI-534090">
        <id>P00522</id>
    </interactant>
    <interactant intactId="EBI-668630">
        <id>P16621</id>
        <label>Lar</label>
    </interactant>
    <organismsDiffer>false</organismsDiffer>
    <experiments>4</experiments>
</comment>
<comment type="subcellular location">
    <subcellularLocation>
        <location>Cytoplasm</location>
    </subcellularLocation>
</comment>
<comment type="tissue specificity">
    <text evidence="7 12">Arm and ena colocalize with Abl at adherens junctions throughout development.</text>
</comment>
<comment type="developmental stage">
    <text evidence="10">Expressed both maternally and zygotically.</text>
</comment>
<comment type="disruption phenotype">
    <text evidence="7 11 12">Both loss- and gain-of-function mutants exhibit neurons within the pCC/MP2 pathway that incorrectly project across the midline. Loss of Abl disrupts cell migration and cell shape changes during dorsal closure (PubMed:11756472, PubMed:9635189). RNAi-mediated knockdown in the neurons of adult males, significantly reduces survival to 53 percent (PubMed:37041188). Adult survival begins to decrease from approximately day 14 post eclosion (PubMed:37041188). Pan-neuronal or glutamatergic neuron-specific RNAi-mediated knockdown decreases adult climbing behavior (PubMed:37041188). Glutamatergic neuron-specific RNAi-mediated knockdown also increases activity, at least during the light cycle (PubMed:37041188).</text>
</comment>
<comment type="similarity">
    <text evidence="2">Belongs to the protein kinase superfamily. Tyr protein kinase family. ABL subfamily.</text>
</comment>
<comment type="sequence caution" evidence="13">
    <conflict type="erroneous gene model prediction">
        <sequence resource="EMBL-CDS" id="AAA28934"/>
    </conflict>
</comment>
<comment type="sequence caution" evidence="13">
    <conflict type="frameshift">
        <sequence resource="EMBL-CDS" id="AAL13726"/>
    </conflict>
</comment>